<evidence type="ECO:0000250" key="1"/>
<evidence type="ECO:0000305" key="2"/>
<accession>Q77TG9</accession>
<reference key="1">
    <citation type="submission" date="1998-09" db="EMBL/GenBank/DDBJ databases">
        <title>Complete genomic sequence of vaccinia virus (Tian Tan strain).</title>
        <authorList>
            <person name="Jin Q."/>
            <person name="Hou Y.D."/>
            <person name="Cheng N.H."/>
            <person name="Yao E.M."/>
            <person name="Cheng S.X."/>
            <person name="Yang X.K."/>
            <person name="Jing D.Y."/>
            <person name="Yu W.H."/>
            <person name="Yuan J.S."/>
            <person name="Ma X.J."/>
        </authorList>
    </citation>
    <scope>NUCLEOTIDE SEQUENCE [LARGE SCALE GENOMIC DNA]</scope>
</reference>
<protein>
    <recommendedName>
        <fullName>Cu-Zn superoxide dismutase-like protein</fullName>
    </recommendedName>
</protein>
<comment type="function">
    <text evidence="1">Virion protein with no enzymatic activity.</text>
</comment>
<comment type="subcellular location">
    <subcellularLocation>
        <location evidence="1">Host cytoplasm</location>
    </subcellularLocation>
</comment>
<comment type="similarity">
    <text evidence="2">Belongs to the Cu-Zn superoxide dismutase family.</text>
</comment>
<organism>
    <name type="scientific">Vaccinia virus (strain Tian Tan)</name>
    <name type="common">VACV</name>
    <dbReference type="NCBI Taxonomy" id="10253"/>
    <lineage>
        <taxon>Viruses</taxon>
        <taxon>Varidnaviria</taxon>
        <taxon>Bamfordvirae</taxon>
        <taxon>Nucleocytoviricota</taxon>
        <taxon>Pokkesviricetes</taxon>
        <taxon>Chitovirales</taxon>
        <taxon>Poxviridae</taxon>
        <taxon>Chordopoxvirinae</taxon>
        <taxon>Orthopoxvirus</taxon>
        <taxon>Vaccinia virus</taxon>
    </lineage>
</organism>
<name>SODL_VACCT</name>
<proteinExistence type="inferred from homology"/>
<organismHost>
    <name type="scientific">Homo sapiens</name>
    <name type="common">Human</name>
    <dbReference type="NCBI Taxonomy" id="9606"/>
</organismHost>
<sequence>MAVCIIDHDNIRGVIYFEPVHGKDKVLGSVIGLKSGTYSLIIHRYGDISQGCDSIGSPEIFIGNIFVNRYGVAYVYLDTDVNIFTIIGKALSISKNDQRLACEVIGISYINEKIIHFLTINENGV</sequence>
<gene>
    <name type="ORF">TA56R</name>
</gene>
<feature type="chain" id="PRO_0000164167" description="Cu-Zn superoxide dismutase-like protein">
    <location>
        <begin position="1"/>
        <end position="125"/>
    </location>
</feature>
<feature type="disulfide bond" evidence="1">
    <location>
        <begin position="52"/>
        <end position="102"/>
    </location>
</feature>
<dbReference type="EMBL" id="AF095689">
    <property type="protein sequence ID" value="AAF34056.1"/>
    <property type="molecule type" value="Genomic_DNA"/>
</dbReference>
<dbReference type="SMR" id="Q77TG9"/>
<dbReference type="Proteomes" id="UP000163220">
    <property type="component" value="Genome"/>
</dbReference>
<dbReference type="GO" id="GO:0030430">
    <property type="term" value="C:host cell cytoplasm"/>
    <property type="evidence" value="ECO:0007669"/>
    <property type="project" value="UniProtKB-SubCell"/>
</dbReference>
<dbReference type="GO" id="GO:0046872">
    <property type="term" value="F:metal ion binding"/>
    <property type="evidence" value="ECO:0007669"/>
    <property type="project" value="InterPro"/>
</dbReference>
<dbReference type="GO" id="GO:0006801">
    <property type="term" value="P:superoxide metabolic process"/>
    <property type="evidence" value="ECO:0007669"/>
    <property type="project" value="InterPro"/>
</dbReference>
<dbReference type="Gene3D" id="2.60.40.200">
    <property type="entry name" value="Superoxide dismutase, copper/zinc binding domain"/>
    <property type="match status" value="1"/>
</dbReference>
<dbReference type="InterPro" id="IPR036423">
    <property type="entry name" value="SOD-like_Cu/Zn_dom_sf"/>
</dbReference>
<dbReference type="SUPFAM" id="SSF49329">
    <property type="entry name" value="Cu,Zn superoxide dismutase-like"/>
    <property type="match status" value="1"/>
</dbReference>
<keyword id="KW-1015">Disulfide bond</keyword>
<keyword id="KW-1035">Host cytoplasm</keyword>